<comment type="function">
    <text evidence="1">Catalyzes the attachment of glutamate to tRNA(Glu) in a two-step reaction: glutamate is first activated by ATP to form Glu-AMP and then transferred to the acceptor end of tRNA(Glu).</text>
</comment>
<comment type="catalytic activity">
    <reaction evidence="1">
        <text>tRNA(Glu) + L-glutamate + ATP = L-glutamyl-tRNA(Glu) + AMP + diphosphate</text>
        <dbReference type="Rhea" id="RHEA:23540"/>
        <dbReference type="Rhea" id="RHEA-COMP:9663"/>
        <dbReference type="Rhea" id="RHEA-COMP:9680"/>
        <dbReference type="ChEBI" id="CHEBI:29985"/>
        <dbReference type="ChEBI" id="CHEBI:30616"/>
        <dbReference type="ChEBI" id="CHEBI:33019"/>
        <dbReference type="ChEBI" id="CHEBI:78442"/>
        <dbReference type="ChEBI" id="CHEBI:78520"/>
        <dbReference type="ChEBI" id="CHEBI:456215"/>
        <dbReference type="EC" id="6.1.1.17"/>
    </reaction>
</comment>
<comment type="subunit">
    <text evidence="1">Monomer.</text>
</comment>
<comment type="subcellular location">
    <subcellularLocation>
        <location evidence="1">Cytoplasm</location>
    </subcellularLocation>
</comment>
<comment type="similarity">
    <text evidence="1">Belongs to the class-I aminoacyl-tRNA synthetase family. Glutamate--tRNA ligase type 1 subfamily.</text>
</comment>
<proteinExistence type="inferred from homology"/>
<organism>
    <name type="scientific">Mycobacterium sp. (strain MCS)</name>
    <dbReference type="NCBI Taxonomy" id="164756"/>
    <lineage>
        <taxon>Bacteria</taxon>
        <taxon>Bacillati</taxon>
        <taxon>Actinomycetota</taxon>
        <taxon>Actinomycetes</taxon>
        <taxon>Mycobacteriales</taxon>
        <taxon>Mycobacteriaceae</taxon>
        <taxon>Mycobacterium</taxon>
    </lineage>
</organism>
<keyword id="KW-0030">Aminoacyl-tRNA synthetase</keyword>
<keyword id="KW-0067">ATP-binding</keyword>
<keyword id="KW-0963">Cytoplasm</keyword>
<keyword id="KW-0436">Ligase</keyword>
<keyword id="KW-0547">Nucleotide-binding</keyword>
<keyword id="KW-0648">Protein biosynthesis</keyword>
<accession>Q1BAQ6</accession>
<name>SYE_MYCSS</name>
<feature type="chain" id="PRO_0000330983" description="Glutamate--tRNA ligase">
    <location>
        <begin position="1"/>
        <end position="490"/>
    </location>
</feature>
<feature type="short sequence motif" description="'HIGH' region" evidence="1">
    <location>
        <begin position="12"/>
        <end position="22"/>
    </location>
</feature>
<feature type="short sequence motif" description="'KMSKS' region" evidence="1">
    <location>
        <begin position="256"/>
        <end position="260"/>
    </location>
</feature>
<feature type="binding site" evidence="1">
    <location>
        <position position="259"/>
    </location>
    <ligand>
        <name>ATP</name>
        <dbReference type="ChEBI" id="CHEBI:30616"/>
    </ligand>
</feature>
<evidence type="ECO:0000255" key="1">
    <source>
        <dbReference type="HAMAP-Rule" id="MF_00022"/>
    </source>
</evidence>
<gene>
    <name evidence="1" type="primary">gltX</name>
    <name type="ordered locus">Mmcs_1919</name>
</gene>
<sequence>MNDMAVRVRFCPSPTGTPHVGLIRTALFNWAYARHTGGTFVFRIEDTDSARDSEESYQAILDALNWLGLDYDEGPEIGGPYAPYRQSQRRDLYRDVIDRLIAAGEAYEAYSTAEEVEARHLAAGRNPKLGYDNFDRDLTDEQRAAHRAEGRNPVIRLRMPERDITWRDLVRGETTFGAGTMPDFALTRGNGEPLYTLVNPVDDALMKITHVLRGEDLLPSTPRQIALYEALIRIGVADGVPEFAHLPSVLGDGNKKLSKRDPQSNLFLHRDRGFIPEGLLNYLALLGWGIADDRDVFSLDEMVAAFDVVDVNSNPARFDQKKADALNAEHIRLLSEDEFTARLKAYFAAHGHDTGLDDAQFAEAARLVQTRIVVLGDAWGLLKFLDEGAFVLDEKAAAKELKADAVPVLDAALAGLEGVGQWTTGAIEEALKKALLEDLELKPRKAFGPIRVAATGASVSPPLFESLELLGRDRSLARLRAGRDHAAAAA</sequence>
<protein>
    <recommendedName>
        <fullName evidence="1">Glutamate--tRNA ligase</fullName>
        <ecNumber evidence="1">6.1.1.17</ecNumber>
    </recommendedName>
    <alternativeName>
        <fullName evidence="1">Glutamyl-tRNA synthetase</fullName>
        <shortName evidence="1">GluRS</shortName>
    </alternativeName>
</protein>
<reference key="1">
    <citation type="submission" date="2006-06" db="EMBL/GenBank/DDBJ databases">
        <title>Complete sequence of chromosome of Mycobacterium sp. MCS.</title>
        <authorList>
            <consortium name="US DOE Joint Genome Institute"/>
            <person name="Copeland A."/>
            <person name="Lucas S."/>
            <person name="Lapidus A."/>
            <person name="Barry K."/>
            <person name="Detter J.C."/>
            <person name="Glavina del Rio T."/>
            <person name="Hammon N."/>
            <person name="Israni S."/>
            <person name="Dalin E."/>
            <person name="Tice H."/>
            <person name="Pitluck S."/>
            <person name="Martinez M."/>
            <person name="Schmutz J."/>
            <person name="Larimer F."/>
            <person name="Land M."/>
            <person name="Hauser L."/>
            <person name="Kyrpides N."/>
            <person name="Kim E."/>
            <person name="Miller C.D."/>
            <person name="Hughes J.E."/>
            <person name="Anderson A.J."/>
            <person name="Sims R.C."/>
            <person name="Richardson P."/>
        </authorList>
    </citation>
    <scope>NUCLEOTIDE SEQUENCE [LARGE SCALE GENOMIC DNA]</scope>
    <source>
        <strain>MCS</strain>
    </source>
</reference>
<dbReference type="EC" id="6.1.1.17" evidence="1"/>
<dbReference type="EMBL" id="CP000384">
    <property type="protein sequence ID" value="ABG08028.1"/>
    <property type="molecule type" value="Genomic_DNA"/>
</dbReference>
<dbReference type="SMR" id="Q1BAQ6"/>
<dbReference type="KEGG" id="mmc:Mmcs_1919"/>
<dbReference type="HOGENOM" id="CLU_015768_6_1_11"/>
<dbReference type="BioCyc" id="MSP164756:G1G6O-1961-MONOMER"/>
<dbReference type="GO" id="GO:0005829">
    <property type="term" value="C:cytosol"/>
    <property type="evidence" value="ECO:0007669"/>
    <property type="project" value="TreeGrafter"/>
</dbReference>
<dbReference type="GO" id="GO:0005524">
    <property type="term" value="F:ATP binding"/>
    <property type="evidence" value="ECO:0007669"/>
    <property type="project" value="UniProtKB-UniRule"/>
</dbReference>
<dbReference type="GO" id="GO:0004818">
    <property type="term" value="F:glutamate-tRNA ligase activity"/>
    <property type="evidence" value="ECO:0007669"/>
    <property type="project" value="UniProtKB-UniRule"/>
</dbReference>
<dbReference type="GO" id="GO:0000049">
    <property type="term" value="F:tRNA binding"/>
    <property type="evidence" value="ECO:0007669"/>
    <property type="project" value="InterPro"/>
</dbReference>
<dbReference type="GO" id="GO:0008270">
    <property type="term" value="F:zinc ion binding"/>
    <property type="evidence" value="ECO:0007669"/>
    <property type="project" value="InterPro"/>
</dbReference>
<dbReference type="GO" id="GO:0006424">
    <property type="term" value="P:glutamyl-tRNA aminoacylation"/>
    <property type="evidence" value="ECO:0007669"/>
    <property type="project" value="UniProtKB-UniRule"/>
</dbReference>
<dbReference type="CDD" id="cd00808">
    <property type="entry name" value="GluRS_core"/>
    <property type="match status" value="1"/>
</dbReference>
<dbReference type="FunFam" id="3.40.50.620:FF:000149">
    <property type="entry name" value="Glutamate--tRNA ligase"/>
    <property type="match status" value="1"/>
</dbReference>
<dbReference type="Gene3D" id="1.10.10.350">
    <property type="match status" value="1"/>
</dbReference>
<dbReference type="Gene3D" id="1.10.8.70">
    <property type="entry name" value="Glutamate-tRNA synthetase, class I, anticodon-binding domain 1"/>
    <property type="match status" value="1"/>
</dbReference>
<dbReference type="Gene3D" id="1.10.1160.10">
    <property type="entry name" value="Glutamyl-trna Synthetase, Domain 2"/>
    <property type="match status" value="1"/>
</dbReference>
<dbReference type="Gene3D" id="3.90.800.10">
    <property type="entry name" value="Glutamyl-tRNA Synthetase, Domain 3"/>
    <property type="match status" value="1"/>
</dbReference>
<dbReference type="Gene3D" id="3.40.50.620">
    <property type="entry name" value="HUPs"/>
    <property type="match status" value="1"/>
</dbReference>
<dbReference type="HAMAP" id="MF_00022">
    <property type="entry name" value="Glu_tRNA_synth_type1"/>
    <property type="match status" value="1"/>
</dbReference>
<dbReference type="InterPro" id="IPR045462">
    <property type="entry name" value="aa-tRNA-synth_I_cd-bd"/>
</dbReference>
<dbReference type="InterPro" id="IPR020751">
    <property type="entry name" value="aa-tRNA-synth_I_codon-bd_sub2"/>
</dbReference>
<dbReference type="InterPro" id="IPR008925">
    <property type="entry name" value="aa_tRNA-synth_I_cd-bd_sf"/>
</dbReference>
<dbReference type="InterPro" id="IPR004527">
    <property type="entry name" value="Glu-tRNA-ligase_bac/mito"/>
</dbReference>
<dbReference type="InterPro" id="IPR020752">
    <property type="entry name" value="Glu-tRNA-synth_I_codon-bd_sub1"/>
</dbReference>
<dbReference type="InterPro" id="IPR000924">
    <property type="entry name" value="Glu/Gln-tRNA-synth"/>
</dbReference>
<dbReference type="InterPro" id="IPR020058">
    <property type="entry name" value="Glu/Gln-tRNA-synth_Ib_cat-dom"/>
</dbReference>
<dbReference type="InterPro" id="IPR020061">
    <property type="entry name" value="Glu_tRNA_lig_a-bdl"/>
</dbReference>
<dbReference type="InterPro" id="IPR049940">
    <property type="entry name" value="GluQ/Sye"/>
</dbReference>
<dbReference type="InterPro" id="IPR033910">
    <property type="entry name" value="GluRS_core"/>
</dbReference>
<dbReference type="InterPro" id="IPR014729">
    <property type="entry name" value="Rossmann-like_a/b/a_fold"/>
</dbReference>
<dbReference type="NCBIfam" id="TIGR00464">
    <property type="entry name" value="gltX_bact"/>
    <property type="match status" value="1"/>
</dbReference>
<dbReference type="PANTHER" id="PTHR43311">
    <property type="entry name" value="GLUTAMATE--TRNA LIGASE"/>
    <property type="match status" value="1"/>
</dbReference>
<dbReference type="PANTHER" id="PTHR43311:SF2">
    <property type="entry name" value="GLUTAMATE--TRNA LIGASE, MITOCHONDRIAL-RELATED"/>
    <property type="match status" value="1"/>
</dbReference>
<dbReference type="Pfam" id="PF19269">
    <property type="entry name" value="Anticodon_2"/>
    <property type="match status" value="1"/>
</dbReference>
<dbReference type="Pfam" id="PF00749">
    <property type="entry name" value="tRNA-synt_1c"/>
    <property type="match status" value="1"/>
</dbReference>
<dbReference type="PRINTS" id="PR00987">
    <property type="entry name" value="TRNASYNTHGLU"/>
</dbReference>
<dbReference type="SUPFAM" id="SSF48163">
    <property type="entry name" value="An anticodon-binding domain of class I aminoacyl-tRNA synthetases"/>
    <property type="match status" value="1"/>
</dbReference>
<dbReference type="SUPFAM" id="SSF52374">
    <property type="entry name" value="Nucleotidylyl transferase"/>
    <property type="match status" value="1"/>
</dbReference>